<reference key="1">
    <citation type="journal article" date="2004" name="Genome Res.">
        <title>The status, quality, and expansion of the NIH full-length cDNA project: the Mammalian Gene Collection (MGC).</title>
        <authorList>
            <consortium name="The MGC Project Team"/>
        </authorList>
    </citation>
    <scope>NUCLEOTIDE SEQUENCE [LARGE SCALE MRNA]</scope>
</reference>
<reference key="2">
    <citation type="journal article" date="2010" name="Cell">
        <title>A tissue-specific atlas of mouse protein phosphorylation and expression.</title>
        <authorList>
            <person name="Huttlin E.L."/>
            <person name="Jedrychowski M.P."/>
            <person name="Elias J.E."/>
            <person name="Goswami T."/>
            <person name="Rad R."/>
            <person name="Beausoleil S.A."/>
            <person name="Villen J."/>
            <person name="Haas W."/>
            <person name="Sowa M.E."/>
            <person name="Gygi S.P."/>
        </authorList>
    </citation>
    <scope>IDENTIFICATION BY MASS SPECTROMETRY [LARGE SCALE ANALYSIS]</scope>
    <source>
        <tissue>Brown adipose tissue</tissue>
        <tissue>Kidney</tissue>
        <tissue>Pancreas</tissue>
        <tissue>Spleen</tissue>
        <tissue>Testis</tissue>
    </source>
</reference>
<reference key="3">
    <citation type="journal article" date="2012" name="Traffic">
        <title>TBC1D13 is a RAB35 specific GAP that plays an important role in GLUT4 trafficking in adipocytes.</title>
        <authorList>
            <person name="Davey J.R."/>
            <person name="Humphrey S.J."/>
            <person name="Junutula J.R."/>
            <person name="Mishra A.K."/>
            <person name="Lambright D.G."/>
            <person name="James D.E."/>
            <person name="Stoeckli J."/>
        </authorList>
    </citation>
    <scope>FUNCTION</scope>
    <scope>SUBCELLULAR LOCATION</scope>
    <scope>INTERACTION WITH RAB1A AND RAB10</scope>
    <scope>TISSUE SPECIFICITY</scope>
</reference>
<dbReference type="EMBL" id="BC025586">
    <property type="protein sequence ID" value="AAH25586.1"/>
    <property type="molecule type" value="mRNA"/>
</dbReference>
<dbReference type="CCDS" id="CCDS15871.1"/>
<dbReference type="RefSeq" id="NP_666364.1">
    <property type="nucleotide sequence ID" value="NM_146252.4"/>
</dbReference>
<dbReference type="SMR" id="Q8R3D1"/>
<dbReference type="FunCoup" id="Q8R3D1">
    <property type="interactions" value="1956"/>
</dbReference>
<dbReference type="STRING" id="10090.ENSMUSP00000048426"/>
<dbReference type="iPTMnet" id="Q8R3D1"/>
<dbReference type="PhosphoSitePlus" id="Q8R3D1"/>
<dbReference type="PaxDb" id="10090-ENSMUSP00000048426"/>
<dbReference type="ProteomicsDB" id="263130"/>
<dbReference type="Pumba" id="Q8R3D1"/>
<dbReference type="Antibodypedia" id="31273">
    <property type="antibodies" value="139 antibodies from 19 providers"/>
</dbReference>
<dbReference type="Ensembl" id="ENSMUST00000044556.12">
    <property type="protein sequence ID" value="ENSMUSP00000048426.6"/>
    <property type="gene ID" value="ENSMUSG00000039678.13"/>
</dbReference>
<dbReference type="GeneID" id="70296"/>
<dbReference type="KEGG" id="mmu:70296"/>
<dbReference type="UCSC" id="uc008jbj.1">
    <property type="organism name" value="mouse"/>
</dbReference>
<dbReference type="AGR" id="MGI:2385326"/>
<dbReference type="CTD" id="54662"/>
<dbReference type="MGI" id="MGI:2385326">
    <property type="gene designation" value="Tbc1d13"/>
</dbReference>
<dbReference type="VEuPathDB" id="HostDB:ENSMUSG00000039678"/>
<dbReference type="eggNOG" id="KOG4567">
    <property type="taxonomic scope" value="Eukaryota"/>
</dbReference>
<dbReference type="GeneTree" id="ENSGT00940000158674"/>
<dbReference type="HOGENOM" id="CLU_018687_0_0_1"/>
<dbReference type="InParanoid" id="Q8R3D1"/>
<dbReference type="OMA" id="TEFPCEE"/>
<dbReference type="OrthoDB" id="10263206at2759"/>
<dbReference type="PhylomeDB" id="Q8R3D1"/>
<dbReference type="TreeFam" id="TF105911"/>
<dbReference type="Reactome" id="R-MMU-8854214">
    <property type="pathway name" value="TBC/RABGAPs"/>
</dbReference>
<dbReference type="BioGRID-ORCS" id="70296">
    <property type="hits" value="1 hit in 79 CRISPR screens"/>
</dbReference>
<dbReference type="PRO" id="PR:Q8R3D1"/>
<dbReference type="Proteomes" id="UP000000589">
    <property type="component" value="Chromosome 2"/>
</dbReference>
<dbReference type="RNAct" id="Q8R3D1">
    <property type="molecule type" value="protein"/>
</dbReference>
<dbReference type="Bgee" id="ENSMUSG00000039678">
    <property type="expression patterns" value="Expressed in yolk sac and 196 other cell types or tissues"/>
</dbReference>
<dbReference type="ExpressionAtlas" id="Q8R3D1">
    <property type="expression patterns" value="baseline and differential"/>
</dbReference>
<dbReference type="GO" id="GO:0005829">
    <property type="term" value="C:cytosol"/>
    <property type="evidence" value="ECO:0000314"/>
    <property type="project" value="UniProtKB"/>
</dbReference>
<dbReference type="GO" id="GO:0016020">
    <property type="term" value="C:membrane"/>
    <property type="evidence" value="ECO:0000314"/>
    <property type="project" value="UniProtKB"/>
</dbReference>
<dbReference type="GO" id="GO:0005096">
    <property type="term" value="F:GTPase activator activity"/>
    <property type="evidence" value="ECO:0000314"/>
    <property type="project" value="UniProtKB"/>
</dbReference>
<dbReference type="GO" id="GO:0031267">
    <property type="term" value="F:small GTPase binding"/>
    <property type="evidence" value="ECO:0000314"/>
    <property type="project" value="UniProtKB"/>
</dbReference>
<dbReference type="GO" id="GO:0006886">
    <property type="term" value="P:intracellular protein transport"/>
    <property type="evidence" value="ECO:0000314"/>
    <property type="project" value="UniProtKB"/>
</dbReference>
<dbReference type="FunFam" id="1.10.472.80:FF:000009">
    <property type="entry name" value="TBC1 domain family member 13"/>
    <property type="match status" value="1"/>
</dbReference>
<dbReference type="FunFam" id="1.10.8.270:FF:000019">
    <property type="entry name" value="TBC1 domain family member 13"/>
    <property type="match status" value="1"/>
</dbReference>
<dbReference type="Gene3D" id="1.10.8.270">
    <property type="entry name" value="putative rabgap domain of human tbc1 domain family member 14 like domains"/>
    <property type="match status" value="1"/>
</dbReference>
<dbReference type="Gene3D" id="1.10.472.80">
    <property type="entry name" value="Ypt/Rab-GAP domain of gyp1p, domain 3"/>
    <property type="match status" value="1"/>
</dbReference>
<dbReference type="InterPro" id="IPR000195">
    <property type="entry name" value="Rab-GAP-TBC_dom"/>
</dbReference>
<dbReference type="InterPro" id="IPR035969">
    <property type="entry name" value="Rab-GAP_TBC_sf"/>
</dbReference>
<dbReference type="PANTHER" id="PTHR22957:SF27">
    <property type="entry name" value="TBC1 DOMAIN FAMILY MEMBER 13"/>
    <property type="match status" value="1"/>
</dbReference>
<dbReference type="PANTHER" id="PTHR22957">
    <property type="entry name" value="TBC1 DOMAIN FAMILY MEMBER GTPASE-ACTIVATING PROTEIN"/>
    <property type="match status" value="1"/>
</dbReference>
<dbReference type="Pfam" id="PF00566">
    <property type="entry name" value="RabGAP-TBC"/>
    <property type="match status" value="1"/>
</dbReference>
<dbReference type="SMART" id="SM00164">
    <property type="entry name" value="TBC"/>
    <property type="match status" value="1"/>
</dbReference>
<dbReference type="SUPFAM" id="SSF47923">
    <property type="entry name" value="Ypt/Rab-GAP domain of gyp1p"/>
    <property type="match status" value="2"/>
</dbReference>
<dbReference type="PROSITE" id="PS50086">
    <property type="entry name" value="TBC_RABGAP"/>
    <property type="match status" value="1"/>
</dbReference>
<gene>
    <name type="primary">Tbc1d13</name>
</gene>
<name>TBC13_MOUSE</name>
<feature type="chain" id="PRO_0000208039" description="TBC1 domain family member 13">
    <location>
        <begin position="1"/>
        <end position="400"/>
    </location>
</feature>
<feature type="domain" description="Rab-GAP TBC" evidence="1">
    <location>
        <begin position="35"/>
        <end position="345"/>
    </location>
</feature>
<sequence>MSSLHKSRIADFQDVLKEPSIVLEKLRELSFSGIPCEGGLRCLCWKILLNYLPLERASWTSILAKQRGLYSQFLREMIIQPGIAKANMGVFREDVTFEDHPLNPNPDSRWNTYFKDNEVLLQIDKDVRRLCPDISFFQRATEYPCLLILDPQNEFETLRKRVEQTTLKSQTVARNRSGVTNMSSPHKNSAPSALNEYEVLPNGCEAHWEVVERILFIYAKLNPGIAYVQGMNEIVGPLYYTFATDPNSEWKEHAEADTFFCFTNLMAEIRDNFIKSLDDSQCGITYKMEKVYSTLKDKDVELYLKLQEQSIKPQFFAFRWLTLLLSQEFLLPDVIRIWDSLFADGNRFDFLLLVCCAMLILIREQLLEGDFTVNMRLLQDYPITDVCQILQKAKELQDSK</sequence>
<accession>Q8R3D1</accession>
<keyword id="KW-0963">Cytoplasm</keyword>
<keyword id="KW-0343">GTPase activation</keyword>
<keyword id="KW-0472">Membrane</keyword>
<keyword id="KW-1185">Reference proteome</keyword>
<protein>
    <recommendedName>
        <fullName>TBC1 domain family member 13</fullName>
    </recommendedName>
</protein>
<organism>
    <name type="scientific">Mus musculus</name>
    <name type="common">Mouse</name>
    <dbReference type="NCBI Taxonomy" id="10090"/>
    <lineage>
        <taxon>Eukaryota</taxon>
        <taxon>Metazoa</taxon>
        <taxon>Chordata</taxon>
        <taxon>Craniata</taxon>
        <taxon>Vertebrata</taxon>
        <taxon>Euteleostomi</taxon>
        <taxon>Mammalia</taxon>
        <taxon>Eutheria</taxon>
        <taxon>Euarchontoglires</taxon>
        <taxon>Glires</taxon>
        <taxon>Rodentia</taxon>
        <taxon>Myomorpha</taxon>
        <taxon>Muroidea</taxon>
        <taxon>Muridae</taxon>
        <taxon>Murinae</taxon>
        <taxon>Mus</taxon>
        <taxon>Mus</taxon>
    </lineage>
</organism>
<evidence type="ECO:0000255" key="1">
    <source>
        <dbReference type="PROSITE-ProRule" id="PRU00163"/>
    </source>
</evidence>
<evidence type="ECO:0000269" key="2">
    <source>
    </source>
</evidence>
<proteinExistence type="evidence at protein level"/>
<comment type="function">
    <text evidence="2">Acts as a GTPase-activating protein for RAB35. Together with RAB35 may be involved in regulation of insulin-induced glucose transporter SLC2A4/GLUT4 translocation to the plasma membrane in adipocytes.</text>
</comment>
<comment type="subunit">
    <text evidence="2">Interacts with RAB1A and RAB10; in a GTP-dependent manner.</text>
</comment>
<comment type="subcellular location">
    <subcellularLocation>
        <location evidence="2">Membrane</location>
    </subcellularLocation>
    <subcellularLocation>
        <location evidence="2">Cytoplasm</location>
    </subcellularLocation>
</comment>
<comment type="tissue specificity">
    <text evidence="2">Expressed in adipocytes.</text>
</comment>